<accession>Q3UHX8</accession>
<accession>Q4JGN0</accession>
<accession>Q9D2W8</accession>
<evidence type="ECO:0000250" key="1"/>
<evidence type="ECO:0000255" key="2">
    <source>
        <dbReference type="PROSITE-ProRule" id="PRU00108"/>
    </source>
</evidence>
<evidence type="ECO:0000256" key="3">
    <source>
        <dbReference type="SAM" id="MobiDB-lite"/>
    </source>
</evidence>
<evidence type="ECO:0000269" key="4">
    <source>
    </source>
</evidence>
<evidence type="ECO:0000269" key="5">
    <source>
    </source>
</evidence>
<evidence type="ECO:0000269" key="6">
    <source>
    </source>
</evidence>
<evidence type="ECO:0000305" key="7"/>
<proteinExistence type="evidence at transcript level"/>
<sequence>MESNLQGTFLLNNTQLAQFSEMKAPMCQYSVQNSFYKLSPPGLGPQLAAGTPHGITDILSRPVATPNSSLLSGYPHVAGFGGLSSQGVYYGPQVGSFSKAGNEYPTRTRNCWADTGQDWRGSARPCSNTPDPLSDTIHKKKHTRPTFTGHQIFALEKTFEQTKYLAGPERARLAYSLGMTESQVKVWFQNRRTKWRKKSALEPSSSTPRAPGGASGDRAASENEDDEYNKPLDPDSDDEKIRLLLRKHRAAFSVLSLGAHSV</sequence>
<dbReference type="EMBL" id="DQ093570">
    <property type="protein sequence ID" value="AAY98485.1"/>
    <property type="molecule type" value="mRNA"/>
</dbReference>
<dbReference type="EMBL" id="AK018683">
    <property type="protein sequence ID" value="BAB31342.1"/>
    <property type="molecule type" value="mRNA"/>
</dbReference>
<dbReference type="EMBL" id="AK147163">
    <property type="protein sequence ID" value="BAE27728.1"/>
    <property type="molecule type" value="mRNA"/>
</dbReference>
<dbReference type="CCDS" id="CCDS52524.1"/>
<dbReference type="RefSeq" id="NP_083278.1">
    <property type="nucleotide sequence ID" value="NM_029002.2"/>
</dbReference>
<dbReference type="SMR" id="Q3UHX8"/>
<dbReference type="BioGRID" id="216845">
    <property type="interactions" value="4"/>
</dbReference>
<dbReference type="FunCoup" id="Q3UHX8">
    <property type="interactions" value="1287"/>
</dbReference>
<dbReference type="STRING" id="10090.ENSMUSP00000071517"/>
<dbReference type="iPTMnet" id="Q3UHX8"/>
<dbReference type="PhosphoSitePlus" id="Q3UHX8"/>
<dbReference type="PaxDb" id="10090-ENSMUSP00000071517"/>
<dbReference type="ProteomicsDB" id="252903"/>
<dbReference type="Antibodypedia" id="23941">
    <property type="antibodies" value="135 antibodies from 22 providers"/>
</dbReference>
<dbReference type="Ensembl" id="ENSMUST00000071588.8">
    <property type="protein sequence ID" value="ENSMUSP00000071517.7"/>
    <property type="gene ID" value="ENSMUSG00000063672.8"/>
</dbReference>
<dbReference type="GeneID" id="74561"/>
<dbReference type="KEGG" id="mmu:74561"/>
<dbReference type="UCSC" id="uc009len.1">
    <property type="organism name" value="mouse"/>
</dbReference>
<dbReference type="AGR" id="MGI:1921811"/>
<dbReference type="CTD" id="157848"/>
<dbReference type="MGI" id="MGI:1921811">
    <property type="gene designation" value="Nkx6-3"/>
</dbReference>
<dbReference type="VEuPathDB" id="HostDB:ENSMUSG00000063672"/>
<dbReference type="eggNOG" id="KOG0847">
    <property type="taxonomic scope" value="Eukaryota"/>
</dbReference>
<dbReference type="GeneTree" id="ENSGT00940000160545"/>
<dbReference type="HOGENOM" id="CLU_064820_1_1_1"/>
<dbReference type="InParanoid" id="Q3UHX8"/>
<dbReference type="OMA" id="EMKAPMC"/>
<dbReference type="OrthoDB" id="6159439at2759"/>
<dbReference type="PhylomeDB" id="Q3UHX8"/>
<dbReference type="TreeFam" id="TF327063"/>
<dbReference type="BioGRID-ORCS" id="74561">
    <property type="hits" value="0 hits in 77 CRISPR screens"/>
</dbReference>
<dbReference type="PRO" id="PR:Q3UHX8"/>
<dbReference type="Proteomes" id="UP000000589">
    <property type="component" value="Chromosome 8"/>
</dbReference>
<dbReference type="RNAct" id="Q3UHX8">
    <property type="molecule type" value="protein"/>
</dbReference>
<dbReference type="Bgee" id="ENSMUSG00000063672">
    <property type="expression patterns" value="Expressed in duodenum and 17 other cell types or tissues"/>
</dbReference>
<dbReference type="ExpressionAtlas" id="Q3UHX8">
    <property type="expression patterns" value="baseline and differential"/>
</dbReference>
<dbReference type="GO" id="GO:0005634">
    <property type="term" value="C:nucleus"/>
    <property type="evidence" value="ECO:0007669"/>
    <property type="project" value="UniProtKB-SubCell"/>
</dbReference>
<dbReference type="GO" id="GO:0001228">
    <property type="term" value="F:DNA-binding transcription activator activity, RNA polymerase II-specific"/>
    <property type="evidence" value="ECO:0007669"/>
    <property type="project" value="Ensembl"/>
</dbReference>
<dbReference type="GO" id="GO:0001227">
    <property type="term" value="F:DNA-binding transcription repressor activity, RNA polymerase II-specific"/>
    <property type="evidence" value="ECO:0007669"/>
    <property type="project" value="Ensembl"/>
</dbReference>
<dbReference type="GO" id="GO:0000978">
    <property type="term" value="F:RNA polymerase II cis-regulatory region sequence-specific DNA binding"/>
    <property type="evidence" value="ECO:0007669"/>
    <property type="project" value="Ensembl"/>
</dbReference>
<dbReference type="GO" id="GO:0001709">
    <property type="term" value="P:cell fate determination"/>
    <property type="evidence" value="ECO:0000315"/>
    <property type="project" value="MGI"/>
</dbReference>
<dbReference type="GO" id="GO:0035883">
    <property type="term" value="P:enteroendocrine cell differentiation"/>
    <property type="evidence" value="ECO:0000315"/>
    <property type="project" value="MGI"/>
</dbReference>
<dbReference type="GO" id="GO:0002067">
    <property type="term" value="P:glandular epithelial cell differentiation"/>
    <property type="evidence" value="ECO:0000315"/>
    <property type="project" value="MGI"/>
</dbReference>
<dbReference type="GO" id="GO:0061106">
    <property type="term" value="P:negative regulation of stomach neuroendocrine cell differentiation"/>
    <property type="evidence" value="ECO:0000315"/>
    <property type="project" value="MGI"/>
</dbReference>
<dbReference type="GO" id="GO:0061101">
    <property type="term" value="P:neuroendocrine cell differentiation"/>
    <property type="evidence" value="ECO:0000315"/>
    <property type="project" value="MGI"/>
</dbReference>
<dbReference type="GO" id="GO:0061102">
    <property type="term" value="P:stomach neuroendocrine cell differentiation"/>
    <property type="evidence" value="ECO:0000315"/>
    <property type="project" value="MGI"/>
</dbReference>
<dbReference type="CDD" id="cd00086">
    <property type="entry name" value="homeodomain"/>
    <property type="match status" value="1"/>
</dbReference>
<dbReference type="FunFam" id="1.10.10.60:FF:000067">
    <property type="entry name" value="NK6 homeobox 1"/>
    <property type="match status" value="1"/>
</dbReference>
<dbReference type="Gene3D" id="1.10.10.60">
    <property type="entry name" value="Homeodomain-like"/>
    <property type="match status" value="1"/>
</dbReference>
<dbReference type="InterPro" id="IPR001356">
    <property type="entry name" value="HD"/>
</dbReference>
<dbReference type="InterPro" id="IPR020479">
    <property type="entry name" value="HD_metazoa"/>
</dbReference>
<dbReference type="InterPro" id="IPR017970">
    <property type="entry name" value="Homeobox_CS"/>
</dbReference>
<dbReference type="InterPro" id="IPR050394">
    <property type="entry name" value="Homeobox_NK-like"/>
</dbReference>
<dbReference type="InterPro" id="IPR009057">
    <property type="entry name" value="Homeodomain-like_sf"/>
</dbReference>
<dbReference type="InterPro" id="IPR000047">
    <property type="entry name" value="HTH_motif"/>
</dbReference>
<dbReference type="PANTHER" id="PTHR24340">
    <property type="entry name" value="HOMEOBOX PROTEIN NKX"/>
    <property type="match status" value="1"/>
</dbReference>
<dbReference type="PANTHER" id="PTHR24340:SF20">
    <property type="entry name" value="HOMEOBOX PROTEIN NKX-6.3"/>
    <property type="match status" value="1"/>
</dbReference>
<dbReference type="Pfam" id="PF00046">
    <property type="entry name" value="Homeodomain"/>
    <property type="match status" value="1"/>
</dbReference>
<dbReference type="PRINTS" id="PR00024">
    <property type="entry name" value="HOMEOBOX"/>
</dbReference>
<dbReference type="PRINTS" id="PR00031">
    <property type="entry name" value="HTHREPRESSR"/>
</dbReference>
<dbReference type="SMART" id="SM00389">
    <property type="entry name" value="HOX"/>
    <property type="match status" value="1"/>
</dbReference>
<dbReference type="SUPFAM" id="SSF46689">
    <property type="entry name" value="Homeodomain-like"/>
    <property type="match status" value="1"/>
</dbReference>
<dbReference type="PROSITE" id="PS00027">
    <property type="entry name" value="HOMEOBOX_1"/>
    <property type="match status" value="1"/>
</dbReference>
<dbReference type="PROSITE" id="PS50071">
    <property type="entry name" value="HOMEOBOX_2"/>
    <property type="match status" value="1"/>
</dbReference>
<reference key="1">
    <citation type="journal article" date="2006" name="Gene Expr. Patterns">
        <title>Cloning and analysis of Nkx6.3 during CNS and gastrointestinal development.</title>
        <authorList>
            <person name="Alanentalo T."/>
            <person name="Chatonnet F."/>
            <person name="Karlen M."/>
            <person name="Sulniute R."/>
            <person name="Ericson J."/>
            <person name="Andersson E."/>
            <person name="Ahlgren U."/>
        </authorList>
    </citation>
    <scope>NUCLEOTIDE SEQUENCE [MRNA]</scope>
    <scope>TISSUE SPECIFICITY</scope>
    <scope>DEVELOPMENTAL STAGE</scope>
    <source>
        <strain>C57BL/6J</strain>
    </source>
</reference>
<reference key="2">
    <citation type="journal article" date="2005" name="Science">
        <title>The transcriptional landscape of the mammalian genome.</title>
        <authorList>
            <person name="Carninci P."/>
            <person name="Kasukawa T."/>
            <person name="Katayama S."/>
            <person name="Gough J."/>
            <person name="Frith M.C."/>
            <person name="Maeda N."/>
            <person name="Oyama R."/>
            <person name="Ravasi T."/>
            <person name="Lenhard B."/>
            <person name="Wells C."/>
            <person name="Kodzius R."/>
            <person name="Shimokawa K."/>
            <person name="Bajic V.B."/>
            <person name="Brenner S.E."/>
            <person name="Batalov S."/>
            <person name="Forrest A.R."/>
            <person name="Zavolan M."/>
            <person name="Davis M.J."/>
            <person name="Wilming L.G."/>
            <person name="Aidinis V."/>
            <person name="Allen J.E."/>
            <person name="Ambesi-Impiombato A."/>
            <person name="Apweiler R."/>
            <person name="Aturaliya R.N."/>
            <person name="Bailey T.L."/>
            <person name="Bansal M."/>
            <person name="Baxter L."/>
            <person name="Beisel K.W."/>
            <person name="Bersano T."/>
            <person name="Bono H."/>
            <person name="Chalk A.M."/>
            <person name="Chiu K.P."/>
            <person name="Choudhary V."/>
            <person name="Christoffels A."/>
            <person name="Clutterbuck D.R."/>
            <person name="Crowe M.L."/>
            <person name="Dalla E."/>
            <person name="Dalrymple B.P."/>
            <person name="de Bono B."/>
            <person name="Della Gatta G."/>
            <person name="di Bernardo D."/>
            <person name="Down T."/>
            <person name="Engstrom P."/>
            <person name="Fagiolini M."/>
            <person name="Faulkner G."/>
            <person name="Fletcher C.F."/>
            <person name="Fukushima T."/>
            <person name="Furuno M."/>
            <person name="Futaki S."/>
            <person name="Gariboldi M."/>
            <person name="Georgii-Hemming P."/>
            <person name="Gingeras T.R."/>
            <person name="Gojobori T."/>
            <person name="Green R.E."/>
            <person name="Gustincich S."/>
            <person name="Harbers M."/>
            <person name="Hayashi Y."/>
            <person name="Hensch T.K."/>
            <person name="Hirokawa N."/>
            <person name="Hill D."/>
            <person name="Huminiecki L."/>
            <person name="Iacono M."/>
            <person name="Ikeo K."/>
            <person name="Iwama A."/>
            <person name="Ishikawa T."/>
            <person name="Jakt M."/>
            <person name="Kanapin A."/>
            <person name="Katoh M."/>
            <person name="Kawasawa Y."/>
            <person name="Kelso J."/>
            <person name="Kitamura H."/>
            <person name="Kitano H."/>
            <person name="Kollias G."/>
            <person name="Krishnan S.P."/>
            <person name="Kruger A."/>
            <person name="Kummerfeld S.K."/>
            <person name="Kurochkin I.V."/>
            <person name="Lareau L.F."/>
            <person name="Lazarevic D."/>
            <person name="Lipovich L."/>
            <person name="Liu J."/>
            <person name="Liuni S."/>
            <person name="McWilliam S."/>
            <person name="Madan Babu M."/>
            <person name="Madera M."/>
            <person name="Marchionni L."/>
            <person name="Matsuda H."/>
            <person name="Matsuzawa S."/>
            <person name="Miki H."/>
            <person name="Mignone F."/>
            <person name="Miyake S."/>
            <person name="Morris K."/>
            <person name="Mottagui-Tabar S."/>
            <person name="Mulder N."/>
            <person name="Nakano N."/>
            <person name="Nakauchi H."/>
            <person name="Ng P."/>
            <person name="Nilsson R."/>
            <person name="Nishiguchi S."/>
            <person name="Nishikawa S."/>
            <person name="Nori F."/>
            <person name="Ohara O."/>
            <person name="Okazaki Y."/>
            <person name="Orlando V."/>
            <person name="Pang K.C."/>
            <person name="Pavan W.J."/>
            <person name="Pavesi G."/>
            <person name="Pesole G."/>
            <person name="Petrovsky N."/>
            <person name="Piazza S."/>
            <person name="Reed J."/>
            <person name="Reid J.F."/>
            <person name="Ring B.Z."/>
            <person name="Ringwald M."/>
            <person name="Rost B."/>
            <person name="Ruan Y."/>
            <person name="Salzberg S.L."/>
            <person name="Sandelin A."/>
            <person name="Schneider C."/>
            <person name="Schoenbach C."/>
            <person name="Sekiguchi K."/>
            <person name="Semple C.A."/>
            <person name="Seno S."/>
            <person name="Sessa L."/>
            <person name="Sheng Y."/>
            <person name="Shibata Y."/>
            <person name="Shimada H."/>
            <person name="Shimada K."/>
            <person name="Silva D."/>
            <person name="Sinclair B."/>
            <person name="Sperling S."/>
            <person name="Stupka E."/>
            <person name="Sugiura K."/>
            <person name="Sultana R."/>
            <person name="Takenaka Y."/>
            <person name="Taki K."/>
            <person name="Tammoja K."/>
            <person name="Tan S.L."/>
            <person name="Tang S."/>
            <person name="Taylor M.S."/>
            <person name="Tegner J."/>
            <person name="Teichmann S.A."/>
            <person name="Ueda H.R."/>
            <person name="van Nimwegen E."/>
            <person name="Verardo R."/>
            <person name="Wei C.L."/>
            <person name="Yagi K."/>
            <person name="Yamanishi H."/>
            <person name="Zabarovsky E."/>
            <person name="Zhu S."/>
            <person name="Zimmer A."/>
            <person name="Hide W."/>
            <person name="Bult C."/>
            <person name="Grimmond S.M."/>
            <person name="Teasdale R.D."/>
            <person name="Liu E.T."/>
            <person name="Brusic V."/>
            <person name="Quackenbush J."/>
            <person name="Wahlestedt C."/>
            <person name="Mattick J.S."/>
            <person name="Hume D.A."/>
            <person name="Kai C."/>
            <person name="Sasaki D."/>
            <person name="Tomaru Y."/>
            <person name="Fukuda S."/>
            <person name="Kanamori-Katayama M."/>
            <person name="Suzuki M."/>
            <person name="Aoki J."/>
            <person name="Arakawa T."/>
            <person name="Iida J."/>
            <person name="Imamura K."/>
            <person name="Itoh M."/>
            <person name="Kato T."/>
            <person name="Kawaji H."/>
            <person name="Kawagashira N."/>
            <person name="Kawashima T."/>
            <person name="Kojima M."/>
            <person name="Kondo S."/>
            <person name="Konno H."/>
            <person name="Nakano K."/>
            <person name="Ninomiya N."/>
            <person name="Nishio T."/>
            <person name="Okada M."/>
            <person name="Plessy C."/>
            <person name="Shibata K."/>
            <person name="Shiraki T."/>
            <person name="Suzuki S."/>
            <person name="Tagami M."/>
            <person name="Waki K."/>
            <person name="Watahiki A."/>
            <person name="Okamura-Oho Y."/>
            <person name="Suzuki H."/>
            <person name="Kawai J."/>
            <person name="Hayashizaki Y."/>
        </authorList>
    </citation>
    <scope>NUCLEOTIDE SEQUENCE [LARGE SCALE MRNA]</scope>
    <source>
        <strain>C57BL/6J</strain>
        <tissue>Cecum</tissue>
        <tissue>Stomach</tissue>
    </source>
</reference>
<reference key="3">
    <citation type="journal article" date="2005" name="Dev. Biol.">
        <title>Endodermal expression of Nkx6 genes depends differentially on Pdx1.</title>
        <authorList>
            <consortium name="The Beta Cell Biology Consortium"/>
            <person name="Pedersen J.K."/>
            <person name="Nelson S.B."/>
            <person name="Jorgensen M.C."/>
            <person name="Henseleit K.D."/>
            <person name="Fujitani Y."/>
            <person name="Wright C.V.E."/>
            <person name="Sander M."/>
            <person name="Serup P."/>
        </authorList>
    </citation>
    <scope>DEVELOPMENTAL STAGE</scope>
</reference>
<reference key="4">
    <citation type="journal article" date="2005" name="J. Histochem. Cytochem.">
        <title>Expression of Nkx6 genes in the hindbrain and gut of the developing mouse.</title>
        <authorList>
            <person name="Nelson S.B."/>
            <person name="Janiesch C."/>
            <person name="Sander M."/>
        </authorList>
    </citation>
    <scope>DEVELOPMENTAL STAGE</scope>
</reference>
<feature type="chain" id="PRO_0000311331" description="Homeobox protein Nkx-6.3">
    <location>
        <begin position="1"/>
        <end position="262"/>
    </location>
</feature>
<feature type="DNA-binding region" description="Homeobox" evidence="2">
    <location>
        <begin position="140"/>
        <end position="199"/>
    </location>
</feature>
<feature type="region of interest" description="Disordered" evidence="3">
    <location>
        <begin position="197"/>
        <end position="237"/>
    </location>
</feature>
<feature type="sequence conflict" description="In Ref. 1; AAY98485." evidence="7" ref="1">
    <original>S</original>
    <variation>G</variation>
    <location>
        <position position="127"/>
    </location>
</feature>
<feature type="sequence conflict" description="In Ref. 2; BAB31342." evidence="7" ref="2">
    <original>D</original>
    <variation>N</variation>
    <location>
        <position position="238"/>
    </location>
</feature>
<organism>
    <name type="scientific">Mus musculus</name>
    <name type="common">Mouse</name>
    <dbReference type="NCBI Taxonomy" id="10090"/>
    <lineage>
        <taxon>Eukaryota</taxon>
        <taxon>Metazoa</taxon>
        <taxon>Chordata</taxon>
        <taxon>Craniata</taxon>
        <taxon>Vertebrata</taxon>
        <taxon>Euteleostomi</taxon>
        <taxon>Mammalia</taxon>
        <taxon>Eutheria</taxon>
        <taxon>Euarchontoglires</taxon>
        <taxon>Glires</taxon>
        <taxon>Rodentia</taxon>
        <taxon>Myomorpha</taxon>
        <taxon>Muroidea</taxon>
        <taxon>Muridae</taxon>
        <taxon>Murinae</taxon>
        <taxon>Mus</taxon>
        <taxon>Mus</taxon>
    </lineage>
</organism>
<comment type="function">
    <text evidence="1">Putative transcription factor, which may be involved in patterning of central nervous system and pancreas.</text>
</comment>
<comment type="subcellular location">
    <subcellularLocation>
        <location evidence="2">Nucleus</location>
    </subcellularLocation>
</comment>
<comment type="tissue specificity">
    <text evidence="6">Expressed in the developing CNS and gastro-intestinal tract.</text>
</comment>
<comment type="developmental stage">
    <text evidence="4 5 6">In the developing embryo, it is confined to the gut and caudal hindbrain. In caudal hindbrain, it is specifically expressed in a subpopulation of differentiating V2 neurons. Not detected prior to 12.5 dpc and is not found in motor nuclei. At 12.5 dpc, it is expressed in the ventral medial aspect of the medullary reticular formation (MDR). At 16.5 dpc, expression is confined to the gigantocellular nucleus, a nucleus that is part of the MDR. In addition to the CNS, it is also expressed in the developing gut, in duodenal and glandular stomach endoderm and, at the end of gestation becomes restricted to the base of the gastric units in the glandular stomach. Expressed at very low level in the pancreatic epithelium. Expressed in the pancreas at 15.5 dpc.</text>
</comment>
<protein>
    <recommendedName>
        <fullName>Homeobox protein Nkx-6.3</fullName>
    </recommendedName>
</protein>
<name>NKX63_MOUSE</name>
<gene>
    <name type="primary">Nkx6-3</name>
</gene>
<keyword id="KW-0238">DNA-binding</keyword>
<keyword id="KW-0371">Homeobox</keyword>
<keyword id="KW-0539">Nucleus</keyword>
<keyword id="KW-1185">Reference proteome</keyword>
<keyword id="KW-0804">Transcription</keyword>
<keyword id="KW-0805">Transcription regulation</keyword>